<proteinExistence type="inferred from homology"/>
<feature type="chain" id="PRO_1000215334" description="UPF0297 protein CLJ_B2793">
    <location>
        <begin position="1"/>
        <end position="83"/>
    </location>
</feature>
<accession>C3L149</accession>
<evidence type="ECO:0000255" key="1">
    <source>
        <dbReference type="HAMAP-Rule" id="MF_01507"/>
    </source>
</evidence>
<name>Y2793_CLOB6</name>
<gene>
    <name type="ordered locus">CLJ_B2793</name>
</gene>
<protein>
    <recommendedName>
        <fullName evidence="1">UPF0297 protein CLJ_B2793</fullName>
    </recommendedName>
</protein>
<dbReference type="EMBL" id="CP001083">
    <property type="protein sequence ID" value="ACQ54347.1"/>
    <property type="molecule type" value="Genomic_DNA"/>
</dbReference>
<dbReference type="RefSeq" id="WP_003385813.1">
    <property type="nucleotide sequence ID" value="NC_012658.1"/>
</dbReference>
<dbReference type="SMR" id="C3L149"/>
<dbReference type="KEGG" id="cbi:CLJ_B2793"/>
<dbReference type="HOGENOM" id="CLU_162466_0_0_9"/>
<dbReference type="Proteomes" id="UP000002333">
    <property type="component" value="Chromosome"/>
</dbReference>
<dbReference type="HAMAP" id="MF_01507">
    <property type="entry name" value="UPF0297"/>
    <property type="match status" value="1"/>
</dbReference>
<dbReference type="InterPro" id="IPR009309">
    <property type="entry name" value="IreB"/>
</dbReference>
<dbReference type="NCBIfam" id="NF003997">
    <property type="entry name" value="PRK05473.1"/>
    <property type="match status" value="1"/>
</dbReference>
<dbReference type="PANTHER" id="PTHR40067">
    <property type="entry name" value="UPF0297 PROTEIN YRZL"/>
    <property type="match status" value="1"/>
</dbReference>
<dbReference type="PANTHER" id="PTHR40067:SF1">
    <property type="entry name" value="UPF0297 PROTEIN YRZL"/>
    <property type="match status" value="1"/>
</dbReference>
<dbReference type="Pfam" id="PF06135">
    <property type="entry name" value="IreB"/>
    <property type="match status" value="1"/>
</dbReference>
<dbReference type="PIRSF" id="PIRSF037258">
    <property type="entry name" value="DUF965_bac"/>
    <property type="match status" value="1"/>
</dbReference>
<organism>
    <name type="scientific">Clostridium botulinum (strain 657 / Type Ba4)</name>
    <dbReference type="NCBI Taxonomy" id="515621"/>
    <lineage>
        <taxon>Bacteria</taxon>
        <taxon>Bacillati</taxon>
        <taxon>Bacillota</taxon>
        <taxon>Clostridia</taxon>
        <taxon>Eubacteriales</taxon>
        <taxon>Clostridiaceae</taxon>
        <taxon>Clostridium</taxon>
    </lineage>
</organism>
<sequence length="83" mass="9411">MSGDKTIQFDPVENKKTLTKEILTKVYNSLLEKGYNPVNQLVGYLISGDPTYITNYNGARSLVIKLERDEILEEVIKSYLGIN</sequence>
<comment type="similarity">
    <text evidence="1">Belongs to the UPF0297 family.</text>
</comment>
<reference key="1">
    <citation type="submission" date="2008-05" db="EMBL/GenBank/DDBJ databases">
        <title>Genome sequence of Clostridium botulinum Ba4 strain 657.</title>
        <authorList>
            <person name="Shrivastava S."/>
            <person name="Brown J.L."/>
            <person name="Bruce D."/>
            <person name="Detter C."/>
            <person name="Munk C."/>
            <person name="Smith L.A."/>
            <person name="Smith T.J."/>
            <person name="Sutton G."/>
            <person name="Brettin T.S."/>
        </authorList>
    </citation>
    <scope>NUCLEOTIDE SEQUENCE [LARGE SCALE GENOMIC DNA]</scope>
    <source>
        <strain>657 / Type Ba4</strain>
    </source>
</reference>